<keyword id="KW-0143">Chaperone</keyword>
<keyword id="KW-0963">Cytoplasm</keyword>
<keyword id="KW-0653">Protein transport</keyword>
<keyword id="KW-1185">Reference proteome</keyword>
<keyword id="KW-0811">Translocation</keyword>
<keyword id="KW-0813">Transport</keyword>
<comment type="function">
    <text evidence="1">One of the proteins required for the normal export of preproteins out of the cell cytoplasm. It is a molecular chaperone that binds to a subset of precursor proteins, maintaining them in a translocation-competent state. It also specifically binds to its receptor SecA.</text>
</comment>
<comment type="subunit">
    <text evidence="1">Homotetramer, a dimer of dimers. One homotetramer interacts with 1 SecA dimer.</text>
</comment>
<comment type="subcellular location">
    <subcellularLocation>
        <location evidence="1">Cytoplasm</location>
    </subcellularLocation>
</comment>
<comment type="similarity">
    <text evidence="1">Belongs to the SecB family.</text>
</comment>
<protein>
    <recommendedName>
        <fullName evidence="1">Protein-export protein SecB</fullName>
    </recommendedName>
</protein>
<accession>C3MB76</accession>
<gene>
    <name evidence="1" type="primary">secB</name>
    <name type="ordered locus">NGR_c33550</name>
</gene>
<evidence type="ECO:0000255" key="1">
    <source>
        <dbReference type="HAMAP-Rule" id="MF_00821"/>
    </source>
</evidence>
<name>SECB_SINFN</name>
<proteinExistence type="inferred from homology"/>
<dbReference type="EMBL" id="CP001389">
    <property type="protein sequence ID" value="ACP27085.1"/>
    <property type="molecule type" value="Genomic_DNA"/>
</dbReference>
<dbReference type="RefSeq" id="WP_012709832.1">
    <property type="nucleotide sequence ID" value="NC_012587.1"/>
</dbReference>
<dbReference type="RefSeq" id="YP_002827838.1">
    <property type="nucleotide sequence ID" value="NC_012587.1"/>
</dbReference>
<dbReference type="SMR" id="C3MB76"/>
<dbReference type="STRING" id="394.NGR_c33550"/>
<dbReference type="KEGG" id="rhi:NGR_c33550"/>
<dbReference type="PATRIC" id="fig|394.7.peg.6200"/>
<dbReference type="eggNOG" id="COG1952">
    <property type="taxonomic scope" value="Bacteria"/>
</dbReference>
<dbReference type="HOGENOM" id="CLU_111574_0_0_5"/>
<dbReference type="OrthoDB" id="9795145at2"/>
<dbReference type="Proteomes" id="UP000001054">
    <property type="component" value="Chromosome"/>
</dbReference>
<dbReference type="GO" id="GO:0005737">
    <property type="term" value="C:cytoplasm"/>
    <property type="evidence" value="ECO:0007669"/>
    <property type="project" value="UniProtKB-SubCell"/>
</dbReference>
<dbReference type="GO" id="GO:0051082">
    <property type="term" value="F:unfolded protein binding"/>
    <property type="evidence" value="ECO:0007669"/>
    <property type="project" value="InterPro"/>
</dbReference>
<dbReference type="GO" id="GO:0006457">
    <property type="term" value="P:protein folding"/>
    <property type="evidence" value="ECO:0007669"/>
    <property type="project" value="UniProtKB-UniRule"/>
</dbReference>
<dbReference type="GO" id="GO:0051262">
    <property type="term" value="P:protein tetramerization"/>
    <property type="evidence" value="ECO:0007669"/>
    <property type="project" value="InterPro"/>
</dbReference>
<dbReference type="GO" id="GO:0015031">
    <property type="term" value="P:protein transport"/>
    <property type="evidence" value="ECO:0007669"/>
    <property type="project" value="UniProtKB-UniRule"/>
</dbReference>
<dbReference type="Gene3D" id="3.10.420.10">
    <property type="entry name" value="SecB-like"/>
    <property type="match status" value="1"/>
</dbReference>
<dbReference type="HAMAP" id="MF_00821">
    <property type="entry name" value="SecB"/>
    <property type="match status" value="1"/>
</dbReference>
<dbReference type="InterPro" id="IPR003708">
    <property type="entry name" value="SecB"/>
</dbReference>
<dbReference type="InterPro" id="IPR035958">
    <property type="entry name" value="SecB-like_sf"/>
</dbReference>
<dbReference type="NCBIfam" id="NF004392">
    <property type="entry name" value="PRK05751.1-3"/>
    <property type="match status" value="1"/>
</dbReference>
<dbReference type="NCBIfam" id="TIGR00809">
    <property type="entry name" value="secB"/>
    <property type="match status" value="1"/>
</dbReference>
<dbReference type="PANTHER" id="PTHR36918">
    <property type="match status" value="1"/>
</dbReference>
<dbReference type="PANTHER" id="PTHR36918:SF1">
    <property type="entry name" value="PROTEIN-EXPORT PROTEIN SECB"/>
    <property type="match status" value="1"/>
</dbReference>
<dbReference type="Pfam" id="PF02556">
    <property type="entry name" value="SecB"/>
    <property type="match status" value="1"/>
</dbReference>
<dbReference type="PRINTS" id="PR01594">
    <property type="entry name" value="SECBCHAPRONE"/>
</dbReference>
<dbReference type="SUPFAM" id="SSF54611">
    <property type="entry name" value="SecB-like"/>
    <property type="match status" value="1"/>
</dbReference>
<reference key="1">
    <citation type="journal article" date="2009" name="Appl. Environ. Microbiol.">
        <title>Rhizobium sp. strain NGR234 possesses a remarkable number of secretion systems.</title>
        <authorList>
            <person name="Schmeisser C."/>
            <person name="Liesegang H."/>
            <person name="Krysciak D."/>
            <person name="Bakkou N."/>
            <person name="Le Quere A."/>
            <person name="Wollherr A."/>
            <person name="Heinemeyer I."/>
            <person name="Morgenstern B."/>
            <person name="Pommerening-Roeser A."/>
            <person name="Flores M."/>
            <person name="Palacios R."/>
            <person name="Brenner S."/>
            <person name="Gottschalk G."/>
            <person name="Schmitz R.A."/>
            <person name="Broughton W.J."/>
            <person name="Perret X."/>
            <person name="Strittmatter A.W."/>
            <person name="Streit W.R."/>
        </authorList>
    </citation>
    <scope>NUCLEOTIDE SEQUENCE [LARGE SCALE GENOMIC DNA]</scope>
    <source>
        <strain>NBRC 101917 / NGR234</strain>
    </source>
</reference>
<feature type="chain" id="PRO_1000148706" description="Protein-export protein SecB">
    <location>
        <begin position="1"/>
        <end position="166"/>
    </location>
</feature>
<organism>
    <name type="scientific">Sinorhizobium fredii (strain NBRC 101917 / NGR234)</name>
    <dbReference type="NCBI Taxonomy" id="394"/>
    <lineage>
        <taxon>Bacteria</taxon>
        <taxon>Pseudomonadati</taxon>
        <taxon>Pseudomonadota</taxon>
        <taxon>Alphaproteobacteria</taxon>
        <taxon>Hyphomicrobiales</taxon>
        <taxon>Rhizobiaceae</taxon>
        <taxon>Sinorhizobium/Ensifer group</taxon>
        <taxon>Sinorhizobium</taxon>
    </lineage>
</organism>
<sequence length="166" mass="18095">MTTDTASNGNGAQQAPSLNILAQYVKDLSFENPGAPRSLQARDQAPSININVNVNANPLAENDFDVVLSLNAQAQDGDKVLFNVELAYGGVFRVSGFPQEHMLPLLFIECPRLLFPFARQIVADATRNGGFPPLMIDPIDFAQMFAQRMAEEKVRAQVANSNTTTN</sequence>